<accession>Q88LE7</accession>
<reference key="1">
    <citation type="journal article" date="2002" name="Environ. Microbiol.">
        <title>Complete genome sequence and comparative analysis of the metabolically versatile Pseudomonas putida KT2440.</title>
        <authorList>
            <person name="Nelson K.E."/>
            <person name="Weinel C."/>
            <person name="Paulsen I.T."/>
            <person name="Dodson R.J."/>
            <person name="Hilbert H."/>
            <person name="Martins dos Santos V.A.P."/>
            <person name="Fouts D.E."/>
            <person name="Gill S.R."/>
            <person name="Pop M."/>
            <person name="Holmes M."/>
            <person name="Brinkac L.M."/>
            <person name="Beanan M.J."/>
            <person name="DeBoy R.T."/>
            <person name="Daugherty S.C."/>
            <person name="Kolonay J.F."/>
            <person name="Madupu R."/>
            <person name="Nelson W.C."/>
            <person name="White O."/>
            <person name="Peterson J.D."/>
            <person name="Khouri H.M."/>
            <person name="Hance I."/>
            <person name="Chris Lee P."/>
            <person name="Holtzapple E.K."/>
            <person name="Scanlan D."/>
            <person name="Tran K."/>
            <person name="Moazzez A."/>
            <person name="Utterback T.R."/>
            <person name="Rizzo M."/>
            <person name="Lee K."/>
            <person name="Kosack D."/>
            <person name="Moestl D."/>
            <person name="Wedler H."/>
            <person name="Lauber J."/>
            <person name="Stjepandic D."/>
            <person name="Hoheisel J."/>
            <person name="Straetz M."/>
            <person name="Heim S."/>
            <person name="Kiewitz C."/>
            <person name="Eisen J.A."/>
            <person name="Timmis K.N."/>
            <person name="Duesterhoeft A."/>
            <person name="Tuemmler B."/>
            <person name="Fraser C.M."/>
        </authorList>
    </citation>
    <scope>NUCLEOTIDE SEQUENCE [LARGE SCALE GENOMIC DNA]</scope>
    <source>
        <strain>ATCC 47054 / DSM 6125 / CFBP 8728 / NCIMB 11950 / KT2440</strain>
    </source>
</reference>
<organism>
    <name type="scientific">Pseudomonas putida (strain ATCC 47054 / DSM 6125 / CFBP 8728 / NCIMB 11950 / KT2440)</name>
    <dbReference type="NCBI Taxonomy" id="160488"/>
    <lineage>
        <taxon>Bacteria</taxon>
        <taxon>Pseudomonadati</taxon>
        <taxon>Pseudomonadota</taxon>
        <taxon>Gammaproteobacteria</taxon>
        <taxon>Pseudomonadales</taxon>
        <taxon>Pseudomonadaceae</taxon>
        <taxon>Pseudomonas</taxon>
    </lineage>
</organism>
<proteinExistence type="inferred from homology"/>
<evidence type="ECO:0000255" key="1">
    <source>
        <dbReference type="HAMAP-Rule" id="MF_01031"/>
    </source>
</evidence>
<sequence>MKAFTQHTGIVAPLDRANVDTDQIIPKQFLKSIKRTGFGPNLFDEWRYLDVGQPYQDNSKRPLNEEFVLNHARYQGASVLLARENFGCGSSREHAPWALDEYGFRSIIAPSFADIFFNNSFKNGLLPIILSDEEVDELFKQVEANPGYQLTIDLQAQAVTRPDGKVLHFEIDAFRKHCLLNGLDDIGLTLQDSDAIKAFEAKHRASQPWLFRDA</sequence>
<gene>
    <name evidence="1" type="primary">leuD</name>
    <name type="ordered locus">PP_1986</name>
</gene>
<dbReference type="EC" id="4.2.1.33" evidence="1"/>
<dbReference type="EMBL" id="AE015451">
    <property type="protein sequence ID" value="AAN67601.1"/>
    <property type="molecule type" value="Genomic_DNA"/>
</dbReference>
<dbReference type="RefSeq" id="NP_744137.1">
    <property type="nucleotide sequence ID" value="NC_002947.4"/>
</dbReference>
<dbReference type="RefSeq" id="WP_010953003.1">
    <property type="nucleotide sequence ID" value="NZ_CP169744.1"/>
</dbReference>
<dbReference type="SMR" id="Q88LE7"/>
<dbReference type="STRING" id="160488.PP_1986"/>
<dbReference type="PaxDb" id="160488-PP_1986"/>
<dbReference type="GeneID" id="83681509"/>
<dbReference type="KEGG" id="ppu:PP_1986"/>
<dbReference type="PATRIC" id="fig|160488.4.peg.2095"/>
<dbReference type="eggNOG" id="COG0066">
    <property type="taxonomic scope" value="Bacteria"/>
</dbReference>
<dbReference type="HOGENOM" id="CLU_081378_0_3_6"/>
<dbReference type="OrthoDB" id="9777465at2"/>
<dbReference type="PhylomeDB" id="Q88LE7"/>
<dbReference type="BioCyc" id="PPUT160488:G1G01-2117-MONOMER"/>
<dbReference type="UniPathway" id="UPA00048">
    <property type="reaction ID" value="UER00071"/>
</dbReference>
<dbReference type="Proteomes" id="UP000000556">
    <property type="component" value="Chromosome"/>
</dbReference>
<dbReference type="GO" id="GO:0009316">
    <property type="term" value="C:3-isopropylmalate dehydratase complex"/>
    <property type="evidence" value="ECO:0007669"/>
    <property type="project" value="InterPro"/>
</dbReference>
<dbReference type="GO" id="GO:0003861">
    <property type="term" value="F:3-isopropylmalate dehydratase activity"/>
    <property type="evidence" value="ECO:0007669"/>
    <property type="project" value="UniProtKB-UniRule"/>
</dbReference>
<dbReference type="GO" id="GO:0009098">
    <property type="term" value="P:L-leucine biosynthetic process"/>
    <property type="evidence" value="ECO:0007669"/>
    <property type="project" value="UniProtKB-UniRule"/>
</dbReference>
<dbReference type="CDD" id="cd01577">
    <property type="entry name" value="IPMI_Swivel"/>
    <property type="match status" value="1"/>
</dbReference>
<dbReference type="FunFam" id="3.20.19.10:FF:000003">
    <property type="entry name" value="3-isopropylmalate dehydratase small subunit"/>
    <property type="match status" value="1"/>
</dbReference>
<dbReference type="Gene3D" id="3.20.19.10">
    <property type="entry name" value="Aconitase, domain 4"/>
    <property type="match status" value="1"/>
</dbReference>
<dbReference type="HAMAP" id="MF_01031">
    <property type="entry name" value="LeuD_type1"/>
    <property type="match status" value="1"/>
</dbReference>
<dbReference type="InterPro" id="IPR004431">
    <property type="entry name" value="3-IsopropMal_deHydase_ssu"/>
</dbReference>
<dbReference type="InterPro" id="IPR015928">
    <property type="entry name" value="Aconitase/3IPM_dehydase_swvl"/>
</dbReference>
<dbReference type="InterPro" id="IPR000573">
    <property type="entry name" value="AconitaseA/IPMdHydase_ssu_swvl"/>
</dbReference>
<dbReference type="InterPro" id="IPR033940">
    <property type="entry name" value="IPMI_Swivel"/>
</dbReference>
<dbReference type="InterPro" id="IPR050075">
    <property type="entry name" value="LeuD"/>
</dbReference>
<dbReference type="NCBIfam" id="TIGR00171">
    <property type="entry name" value="leuD"/>
    <property type="match status" value="1"/>
</dbReference>
<dbReference type="NCBIfam" id="NF002458">
    <property type="entry name" value="PRK01641.1"/>
    <property type="match status" value="1"/>
</dbReference>
<dbReference type="PANTHER" id="PTHR43345:SF5">
    <property type="entry name" value="3-ISOPROPYLMALATE DEHYDRATASE SMALL SUBUNIT"/>
    <property type="match status" value="1"/>
</dbReference>
<dbReference type="PANTHER" id="PTHR43345">
    <property type="entry name" value="3-ISOPROPYLMALATE DEHYDRATASE SMALL SUBUNIT 2-RELATED-RELATED"/>
    <property type="match status" value="1"/>
</dbReference>
<dbReference type="Pfam" id="PF00694">
    <property type="entry name" value="Aconitase_C"/>
    <property type="match status" value="1"/>
</dbReference>
<dbReference type="SUPFAM" id="SSF52016">
    <property type="entry name" value="LeuD/IlvD-like"/>
    <property type="match status" value="1"/>
</dbReference>
<feature type="chain" id="PRO_0000141859" description="3-isopropylmalate dehydratase small subunit">
    <location>
        <begin position="1"/>
        <end position="214"/>
    </location>
</feature>
<name>LEUD_PSEPK</name>
<keyword id="KW-0028">Amino-acid biosynthesis</keyword>
<keyword id="KW-0100">Branched-chain amino acid biosynthesis</keyword>
<keyword id="KW-0432">Leucine biosynthesis</keyword>
<keyword id="KW-0456">Lyase</keyword>
<keyword id="KW-1185">Reference proteome</keyword>
<protein>
    <recommendedName>
        <fullName evidence="1">3-isopropylmalate dehydratase small subunit</fullName>
        <ecNumber evidence="1">4.2.1.33</ecNumber>
    </recommendedName>
    <alternativeName>
        <fullName evidence="1">Alpha-IPM isomerase</fullName>
        <shortName evidence="1">IPMI</shortName>
    </alternativeName>
    <alternativeName>
        <fullName evidence="1">Isopropylmalate isomerase</fullName>
    </alternativeName>
</protein>
<comment type="function">
    <text evidence="1">Catalyzes the isomerization between 2-isopropylmalate and 3-isopropylmalate, via the formation of 2-isopropylmaleate.</text>
</comment>
<comment type="catalytic activity">
    <reaction evidence="1">
        <text>(2R,3S)-3-isopropylmalate = (2S)-2-isopropylmalate</text>
        <dbReference type="Rhea" id="RHEA:32287"/>
        <dbReference type="ChEBI" id="CHEBI:1178"/>
        <dbReference type="ChEBI" id="CHEBI:35121"/>
        <dbReference type="EC" id="4.2.1.33"/>
    </reaction>
</comment>
<comment type="pathway">
    <text evidence="1">Amino-acid biosynthesis; L-leucine biosynthesis; L-leucine from 3-methyl-2-oxobutanoate: step 2/4.</text>
</comment>
<comment type="subunit">
    <text evidence="1">Heterodimer of LeuC and LeuD.</text>
</comment>
<comment type="similarity">
    <text evidence="1">Belongs to the LeuD family. LeuD type 1 subfamily.</text>
</comment>